<feature type="chain" id="PRO_0000184190" description="Transcriptional activator protein SolR">
    <location>
        <begin position="1"/>
        <end position="236"/>
    </location>
</feature>
<feature type="domain" description="HTH luxR-type" evidence="1">
    <location>
        <begin position="169"/>
        <end position="234"/>
    </location>
</feature>
<feature type="DNA-binding region" description="H-T-H motif" evidence="1">
    <location>
        <begin position="193"/>
        <end position="212"/>
    </location>
</feature>
<protein>
    <recommendedName>
        <fullName>Transcriptional activator protein SolR</fullName>
    </recommendedName>
</protein>
<comment type="similarity">
    <text evidence="2">Belongs to the autoinducer-regulated transcriptional regulatory protein family.</text>
</comment>
<gene>
    <name type="primary">solR</name>
</gene>
<name>SOLR_RALSL</name>
<accession>O30919</accession>
<sequence>MEPDFQDAYHAFRTAEDEHQLFREIAAIARQLGFDYCCYGARMPLPVSKPAVAIFDTYPAGWMQHYQASGFLDIDPTVRAGASSSDLIVWPVSIRDDAARLWSDARDAGLNIGVARSSWTAHGAFGLLTLARHADPLTAAELGQLSIATHWLANLAHTLMSPFLVPQLVPESNAVLTTREREVLCWTGEGKTAYEIGQILRISERTVNFHVNNVLLKLAATNKVQAVVKAIATGLI</sequence>
<proteinExistence type="inferred from homology"/>
<reference key="1">
    <citation type="journal article" date="1997" name="J. Bacteriol.">
        <title>Hierarchical autoinduction in Ralstonia solanacearum: control of acyl-homoserine lactone production by a novel autoregulatory system responsive to 3-hydroxypalmitic acid methyl ester.</title>
        <authorList>
            <person name="Flavier A.B."/>
            <person name="Ganova-Raeva L.M."/>
            <person name="Schell M.A."/>
            <person name="Denny T.P."/>
        </authorList>
    </citation>
    <scope>NUCLEOTIDE SEQUENCE [GENOMIC DNA]</scope>
    <source>
        <strain>AW1</strain>
    </source>
</reference>
<evidence type="ECO:0000255" key="1">
    <source>
        <dbReference type="PROSITE-ProRule" id="PRU00411"/>
    </source>
</evidence>
<evidence type="ECO:0000305" key="2"/>
<dbReference type="EMBL" id="AF021840">
    <property type="protein sequence ID" value="AAC45947.1"/>
    <property type="molecule type" value="Genomic_DNA"/>
</dbReference>
<dbReference type="SMR" id="O30919"/>
<dbReference type="GO" id="GO:0003677">
    <property type="term" value="F:DNA binding"/>
    <property type="evidence" value="ECO:0007669"/>
    <property type="project" value="UniProtKB-KW"/>
</dbReference>
<dbReference type="GO" id="GO:0009372">
    <property type="term" value="P:quorum sensing"/>
    <property type="evidence" value="ECO:0007669"/>
    <property type="project" value="UniProtKB-KW"/>
</dbReference>
<dbReference type="GO" id="GO:0006355">
    <property type="term" value="P:regulation of DNA-templated transcription"/>
    <property type="evidence" value="ECO:0007669"/>
    <property type="project" value="InterPro"/>
</dbReference>
<dbReference type="CDD" id="cd06170">
    <property type="entry name" value="LuxR_C_like"/>
    <property type="match status" value="1"/>
</dbReference>
<dbReference type="Gene3D" id="3.30.450.80">
    <property type="entry name" value="Transcription factor LuxR-like, autoinducer-binding domain"/>
    <property type="match status" value="1"/>
</dbReference>
<dbReference type="Gene3D" id="1.10.10.10">
    <property type="entry name" value="Winged helix-like DNA-binding domain superfamily/Winged helix DNA-binding domain"/>
    <property type="match status" value="1"/>
</dbReference>
<dbReference type="InterPro" id="IPR016032">
    <property type="entry name" value="Sig_transdc_resp-reg_C-effctor"/>
</dbReference>
<dbReference type="InterPro" id="IPR005143">
    <property type="entry name" value="TF_LuxR_autoind-bd_dom"/>
</dbReference>
<dbReference type="InterPro" id="IPR036693">
    <property type="entry name" value="TF_LuxR_autoind-bd_dom_sf"/>
</dbReference>
<dbReference type="InterPro" id="IPR000792">
    <property type="entry name" value="Tscrpt_reg_LuxR_C"/>
</dbReference>
<dbReference type="InterPro" id="IPR036388">
    <property type="entry name" value="WH-like_DNA-bd_sf"/>
</dbReference>
<dbReference type="PANTHER" id="PTHR44688">
    <property type="entry name" value="DNA-BINDING TRANSCRIPTIONAL ACTIVATOR DEVR_DOSR"/>
    <property type="match status" value="1"/>
</dbReference>
<dbReference type="PANTHER" id="PTHR44688:SF25">
    <property type="entry name" value="HTH LUXR-TYPE DOMAIN-CONTAINING PROTEIN"/>
    <property type="match status" value="1"/>
</dbReference>
<dbReference type="Pfam" id="PF03472">
    <property type="entry name" value="Autoind_bind"/>
    <property type="match status" value="1"/>
</dbReference>
<dbReference type="Pfam" id="PF00196">
    <property type="entry name" value="GerE"/>
    <property type="match status" value="1"/>
</dbReference>
<dbReference type="PRINTS" id="PR00038">
    <property type="entry name" value="HTHLUXR"/>
</dbReference>
<dbReference type="SMART" id="SM00421">
    <property type="entry name" value="HTH_LUXR"/>
    <property type="match status" value="1"/>
</dbReference>
<dbReference type="SUPFAM" id="SSF46894">
    <property type="entry name" value="C-terminal effector domain of the bipartite response regulators"/>
    <property type="match status" value="1"/>
</dbReference>
<dbReference type="SUPFAM" id="SSF75516">
    <property type="entry name" value="Pheromone-binding domain of LuxR-like quorum-sensing transcription factors"/>
    <property type="match status" value="1"/>
</dbReference>
<dbReference type="PROSITE" id="PS00622">
    <property type="entry name" value="HTH_LUXR_1"/>
    <property type="match status" value="1"/>
</dbReference>
<dbReference type="PROSITE" id="PS50043">
    <property type="entry name" value="HTH_LUXR_2"/>
    <property type="match status" value="1"/>
</dbReference>
<organism>
    <name type="scientific">Ralstonia solanacearum</name>
    <name type="common">Pseudomonas solanacearum</name>
    <dbReference type="NCBI Taxonomy" id="305"/>
    <lineage>
        <taxon>Bacteria</taxon>
        <taxon>Pseudomonadati</taxon>
        <taxon>Pseudomonadota</taxon>
        <taxon>Betaproteobacteria</taxon>
        <taxon>Burkholderiales</taxon>
        <taxon>Burkholderiaceae</taxon>
        <taxon>Ralstonia</taxon>
        <taxon>Ralstonia solanacearum species complex</taxon>
    </lineage>
</organism>
<keyword id="KW-0010">Activator</keyword>
<keyword id="KW-0238">DNA-binding</keyword>
<keyword id="KW-0673">Quorum sensing</keyword>
<keyword id="KW-0804">Transcription</keyword>
<keyword id="KW-0805">Transcription regulation</keyword>